<dbReference type="EMBL" id="CP001034">
    <property type="protein sequence ID" value="ACB84686.1"/>
    <property type="molecule type" value="Genomic_DNA"/>
</dbReference>
<dbReference type="RefSeq" id="WP_012447561.1">
    <property type="nucleotide sequence ID" value="NC_010718.1"/>
</dbReference>
<dbReference type="SMR" id="B2A159"/>
<dbReference type="FunCoup" id="B2A159">
    <property type="interactions" value="325"/>
</dbReference>
<dbReference type="STRING" id="457570.Nther_1103"/>
<dbReference type="KEGG" id="nth:Nther_1103"/>
<dbReference type="eggNOG" id="COG1219">
    <property type="taxonomic scope" value="Bacteria"/>
</dbReference>
<dbReference type="HOGENOM" id="CLU_014218_8_2_9"/>
<dbReference type="InParanoid" id="B2A159"/>
<dbReference type="OrthoDB" id="9804062at2"/>
<dbReference type="Proteomes" id="UP000001683">
    <property type="component" value="Chromosome"/>
</dbReference>
<dbReference type="GO" id="GO:0009376">
    <property type="term" value="C:HslUV protease complex"/>
    <property type="evidence" value="ECO:0007669"/>
    <property type="project" value="TreeGrafter"/>
</dbReference>
<dbReference type="GO" id="GO:0005524">
    <property type="term" value="F:ATP binding"/>
    <property type="evidence" value="ECO:0007669"/>
    <property type="project" value="UniProtKB-UniRule"/>
</dbReference>
<dbReference type="GO" id="GO:0016887">
    <property type="term" value="F:ATP hydrolysis activity"/>
    <property type="evidence" value="ECO:0007669"/>
    <property type="project" value="InterPro"/>
</dbReference>
<dbReference type="GO" id="GO:0140662">
    <property type="term" value="F:ATP-dependent protein folding chaperone"/>
    <property type="evidence" value="ECO:0007669"/>
    <property type="project" value="InterPro"/>
</dbReference>
<dbReference type="GO" id="GO:0046983">
    <property type="term" value="F:protein dimerization activity"/>
    <property type="evidence" value="ECO:0007669"/>
    <property type="project" value="InterPro"/>
</dbReference>
<dbReference type="GO" id="GO:0051082">
    <property type="term" value="F:unfolded protein binding"/>
    <property type="evidence" value="ECO:0007669"/>
    <property type="project" value="UniProtKB-UniRule"/>
</dbReference>
<dbReference type="GO" id="GO:0008270">
    <property type="term" value="F:zinc ion binding"/>
    <property type="evidence" value="ECO:0007669"/>
    <property type="project" value="InterPro"/>
</dbReference>
<dbReference type="GO" id="GO:0051301">
    <property type="term" value="P:cell division"/>
    <property type="evidence" value="ECO:0007669"/>
    <property type="project" value="TreeGrafter"/>
</dbReference>
<dbReference type="GO" id="GO:0051603">
    <property type="term" value="P:proteolysis involved in protein catabolic process"/>
    <property type="evidence" value="ECO:0007669"/>
    <property type="project" value="TreeGrafter"/>
</dbReference>
<dbReference type="CDD" id="cd19497">
    <property type="entry name" value="RecA-like_ClpX"/>
    <property type="match status" value="1"/>
</dbReference>
<dbReference type="FunFam" id="1.10.8.60:FF:000002">
    <property type="entry name" value="ATP-dependent Clp protease ATP-binding subunit ClpX"/>
    <property type="match status" value="1"/>
</dbReference>
<dbReference type="FunFam" id="3.40.50.300:FF:000005">
    <property type="entry name" value="ATP-dependent Clp protease ATP-binding subunit ClpX"/>
    <property type="match status" value="1"/>
</dbReference>
<dbReference type="Gene3D" id="1.10.8.60">
    <property type="match status" value="1"/>
</dbReference>
<dbReference type="Gene3D" id="6.20.220.10">
    <property type="entry name" value="ClpX chaperone, C4-type zinc finger domain"/>
    <property type="match status" value="1"/>
</dbReference>
<dbReference type="Gene3D" id="3.40.50.300">
    <property type="entry name" value="P-loop containing nucleotide triphosphate hydrolases"/>
    <property type="match status" value="1"/>
</dbReference>
<dbReference type="HAMAP" id="MF_00175">
    <property type="entry name" value="ClpX"/>
    <property type="match status" value="1"/>
</dbReference>
<dbReference type="InterPro" id="IPR003593">
    <property type="entry name" value="AAA+_ATPase"/>
</dbReference>
<dbReference type="InterPro" id="IPR050052">
    <property type="entry name" value="ATP-dep_Clp_protease_ClpX"/>
</dbReference>
<dbReference type="InterPro" id="IPR003959">
    <property type="entry name" value="ATPase_AAA_core"/>
</dbReference>
<dbReference type="InterPro" id="IPR019489">
    <property type="entry name" value="Clp_ATPase_C"/>
</dbReference>
<dbReference type="InterPro" id="IPR004487">
    <property type="entry name" value="Clp_protease_ATP-bd_su_ClpX"/>
</dbReference>
<dbReference type="InterPro" id="IPR046425">
    <property type="entry name" value="ClpX_bact"/>
</dbReference>
<dbReference type="InterPro" id="IPR027417">
    <property type="entry name" value="P-loop_NTPase"/>
</dbReference>
<dbReference type="InterPro" id="IPR010603">
    <property type="entry name" value="Znf_CppX_C4"/>
</dbReference>
<dbReference type="InterPro" id="IPR038366">
    <property type="entry name" value="Znf_CppX_C4_sf"/>
</dbReference>
<dbReference type="NCBIfam" id="TIGR00382">
    <property type="entry name" value="clpX"/>
    <property type="match status" value="1"/>
</dbReference>
<dbReference type="NCBIfam" id="NF003745">
    <property type="entry name" value="PRK05342.1"/>
    <property type="match status" value="1"/>
</dbReference>
<dbReference type="PANTHER" id="PTHR48102:SF7">
    <property type="entry name" value="ATP-DEPENDENT CLP PROTEASE ATP-BINDING SUBUNIT CLPX-LIKE, MITOCHONDRIAL"/>
    <property type="match status" value="1"/>
</dbReference>
<dbReference type="PANTHER" id="PTHR48102">
    <property type="entry name" value="ATP-DEPENDENT CLP PROTEASE ATP-BINDING SUBUNIT CLPX-LIKE, MITOCHONDRIAL-RELATED"/>
    <property type="match status" value="1"/>
</dbReference>
<dbReference type="Pfam" id="PF07724">
    <property type="entry name" value="AAA_2"/>
    <property type="match status" value="1"/>
</dbReference>
<dbReference type="Pfam" id="PF10431">
    <property type="entry name" value="ClpB_D2-small"/>
    <property type="match status" value="1"/>
</dbReference>
<dbReference type="Pfam" id="PF06689">
    <property type="entry name" value="zf-C4_ClpX"/>
    <property type="match status" value="1"/>
</dbReference>
<dbReference type="SMART" id="SM00382">
    <property type="entry name" value="AAA"/>
    <property type="match status" value="1"/>
</dbReference>
<dbReference type="SMART" id="SM01086">
    <property type="entry name" value="ClpB_D2-small"/>
    <property type="match status" value="1"/>
</dbReference>
<dbReference type="SMART" id="SM00994">
    <property type="entry name" value="zf-C4_ClpX"/>
    <property type="match status" value="1"/>
</dbReference>
<dbReference type="SUPFAM" id="SSF57716">
    <property type="entry name" value="Glucocorticoid receptor-like (DNA-binding domain)"/>
    <property type="match status" value="1"/>
</dbReference>
<dbReference type="SUPFAM" id="SSF52540">
    <property type="entry name" value="P-loop containing nucleoside triphosphate hydrolases"/>
    <property type="match status" value="1"/>
</dbReference>
<dbReference type="PROSITE" id="PS51902">
    <property type="entry name" value="CLPX_ZB"/>
    <property type="match status" value="1"/>
</dbReference>
<organism>
    <name type="scientific">Natranaerobius thermophilus (strain ATCC BAA-1301 / DSM 18059 / JW/NM-WN-LF)</name>
    <dbReference type="NCBI Taxonomy" id="457570"/>
    <lineage>
        <taxon>Bacteria</taxon>
        <taxon>Bacillati</taxon>
        <taxon>Bacillota</taxon>
        <taxon>Clostridia</taxon>
        <taxon>Natranaerobiales</taxon>
        <taxon>Natranaerobiaceae</taxon>
        <taxon>Natranaerobius</taxon>
    </lineage>
</organism>
<protein>
    <recommendedName>
        <fullName evidence="1">ATP-dependent Clp protease ATP-binding subunit ClpX</fullName>
    </recommendedName>
</protein>
<name>CLPX_NATTJ</name>
<feature type="chain" id="PRO_1000097974" description="ATP-dependent Clp protease ATP-binding subunit ClpX">
    <location>
        <begin position="1"/>
        <end position="420"/>
    </location>
</feature>
<feature type="domain" description="ClpX-type ZB" evidence="2">
    <location>
        <begin position="1"/>
        <end position="54"/>
    </location>
</feature>
<feature type="binding site" evidence="2">
    <location>
        <position position="13"/>
    </location>
    <ligand>
        <name>Zn(2+)</name>
        <dbReference type="ChEBI" id="CHEBI:29105"/>
    </ligand>
</feature>
<feature type="binding site" evidence="2">
    <location>
        <position position="16"/>
    </location>
    <ligand>
        <name>Zn(2+)</name>
        <dbReference type="ChEBI" id="CHEBI:29105"/>
    </ligand>
</feature>
<feature type="binding site" evidence="2">
    <location>
        <position position="35"/>
    </location>
    <ligand>
        <name>Zn(2+)</name>
        <dbReference type="ChEBI" id="CHEBI:29105"/>
    </ligand>
</feature>
<feature type="binding site" evidence="2">
    <location>
        <position position="38"/>
    </location>
    <ligand>
        <name>Zn(2+)</name>
        <dbReference type="ChEBI" id="CHEBI:29105"/>
    </ligand>
</feature>
<feature type="binding site" evidence="1">
    <location>
        <begin position="118"/>
        <end position="125"/>
    </location>
    <ligand>
        <name>ATP</name>
        <dbReference type="ChEBI" id="CHEBI:30616"/>
    </ligand>
</feature>
<sequence length="420" mass="46624">MFKLNDEKGRLKCSFCGKTQEQVKKLVAGPGVYICDECIELCNEIIEEELNDDSDMGFSEIPKPQEIYEILNDYIIGQEEAKKALSVAVYNHYKRVNNEAKKKDDVEIQKSNILLLGPTGVGKTLLAQTLAKILNVPFAMADATSLTEAGYVGEDVENILLKLIQSADYDVEKAEKGIVYIDEIDKVARKTDNPSITRDVSGEGVQQALLRILEGTKASVPPQGGRKHPHQEFIQIDTTNILFICGGAFDGIDKIIQNRIGKKGLGFGAEVQSAKDEGIGEILSKVLPQDLLKFGLIPEFVGRIPVISSLDALDEDALVRILVEPKNALVKQYQKLFEIDGVELEMQEDALRAIAREAIERNTGARGLRAIVEEHLNDIMYDLPSMDDVNKCIITEEVIEKDERPMLVKDNQGEKKHESA</sequence>
<reference key="1">
    <citation type="submission" date="2008-04" db="EMBL/GenBank/DDBJ databases">
        <title>Complete sequence of chromosome of Natranaerobius thermophilus JW/NM-WN-LF.</title>
        <authorList>
            <consortium name="US DOE Joint Genome Institute"/>
            <person name="Copeland A."/>
            <person name="Lucas S."/>
            <person name="Lapidus A."/>
            <person name="Glavina del Rio T."/>
            <person name="Dalin E."/>
            <person name="Tice H."/>
            <person name="Bruce D."/>
            <person name="Goodwin L."/>
            <person name="Pitluck S."/>
            <person name="Chertkov O."/>
            <person name="Brettin T."/>
            <person name="Detter J.C."/>
            <person name="Han C."/>
            <person name="Kuske C.R."/>
            <person name="Schmutz J."/>
            <person name="Larimer F."/>
            <person name="Land M."/>
            <person name="Hauser L."/>
            <person name="Kyrpides N."/>
            <person name="Lykidis A."/>
            <person name="Mesbah N.M."/>
            <person name="Wiegel J."/>
        </authorList>
    </citation>
    <scope>NUCLEOTIDE SEQUENCE [LARGE SCALE GENOMIC DNA]</scope>
    <source>
        <strain>ATCC BAA-1301 / DSM 18059 / JW/NM-WN-LF</strain>
    </source>
</reference>
<gene>
    <name evidence="1" type="primary">clpX</name>
    <name type="ordered locus">Nther_1103</name>
</gene>
<proteinExistence type="inferred from homology"/>
<keyword id="KW-0067">ATP-binding</keyword>
<keyword id="KW-0143">Chaperone</keyword>
<keyword id="KW-0479">Metal-binding</keyword>
<keyword id="KW-0547">Nucleotide-binding</keyword>
<keyword id="KW-1185">Reference proteome</keyword>
<keyword id="KW-0862">Zinc</keyword>
<comment type="function">
    <text evidence="1">ATP-dependent specificity component of the Clp protease. It directs the protease to specific substrates. Can perform chaperone functions in the absence of ClpP.</text>
</comment>
<comment type="subunit">
    <text evidence="1">Component of the ClpX-ClpP complex. Forms a hexameric ring that, in the presence of ATP, binds to fourteen ClpP subunits assembled into a disk-like structure with a central cavity, resembling the structure of eukaryotic proteasomes.</text>
</comment>
<comment type="similarity">
    <text evidence="1">Belongs to the ClpX chaperone family.</text>
</comment>
<evidence type="ECO:0000255" key="1">
    <source>
        <dbReference type="HAMAP-Rule" id="MF_00175"/>
    </source>
</evidence>
<evidence type="ECO:0000255" key="2">
    <source>
        <dbReference type="PROSITE-ProRule" id="PRU01250"/>
    </source>
</evidence>
<accession>B2A159</accession>